<protein>
    <recommendedName>
        <fullName evidence="1">UvrABC system protein C</fullName>
        <shortName evidence="1">Protein UvrC</shortName>
    </recommendedName>
    <alternativeName>
        <fullName evidence="1">Excinuclease ABC subunit C</fullName>
    </alternativeName>
</protein>
<comment type="function">
    <text evidence="1">The UvrABC repair system catalyzes the recognition and processing of DNA lesions. UvrC both incises the 5' and 3' sides of the lesion. The N-terminal half is responsible for the 3' incision and the C-terminal half is responsible for the 5' incision.</text>
</comment>
<comment type="subunit">
    <text evidence="1">Interacts with UvrB in an incision complex.</text>
</comment>
<comment type="subcellular location">
    <subcellularLocation>
        <location evidence="1">Cytoplasm</location>
    </subcellularLocation>
</comment>
<comment type="similarity">
    <text evidence="1">Belongs to the UvrC family.</text>
</comment>
<gene>
    <name evidence="1" type="primary">uvrC</name>
    <name type="ordered locus">ABC2667</name>
</gene>
<dbReference type="EMBL" id="AP006627">
    <property type="protein sequence ID" value="BAD65202.1"/>
    <property type="molecule type" value="Genomic_DNA"/>
</dbReference>
<dbReference type="RefSeq" id="WP_011247510.1">
    <property type="nucleotide sequence ID" value="NC_006582.1"/>
</dbReference>
<dbReference type="SMR" id="Q5WEK8"/>
<dbReference type="STRING" id="66692.ABC2667"/>
<dbReference type="KEGG" id="bcl:ABC2667"/>
<dbReference type="eggNOG" id="COG0322">
    <property type="taxonomic scope" value="Bacteria"/>
</dbReference>
<dbReference type="HOGENOM" id="CLU_014841_3_2_9"/>
<dbReference type="OrthoDB" id="9804933at2"/>
<dbReference type="Proteomes" id="UP000001168">
    <property type="component" value="Chromosome"/>
</dbReference>
<dbReference type="GO" id="GO:0005737">
    <property type="term" value="C:cytoplasm"/>
    <property type="evidence" value="ECO:0007669"/>
    <property type="project" value="UniProtKB-SubCell"/>
</dbReference>
<dbReference type="GO" id="GO:0009380">
    <property type="term" value="C:excinuclease repair complex"/>
    <property type="evidence" value="ECO:0007669"/>
    <property type="project" value="InterPro"/>
</dbReference>
<dbReference type="GO" id="GO:0003677">
    <property type="term" value="F:DNA binding"/>
    <property type="evidence" value="ECO:0007669"/>
    <property type="project" value="UniProtKB-UniRule"/>
</dbReference>
<dbReference type="GO" id="GO:0009381">
    <property type="term" value="F:excinuclease ABC activity"/>
    <property type="evidence" value="ECO:0007669"/>
    <property type="project" value="UniProtKB-UniRule"/>
</dbReference>
<dbReference type="GO" id="GO:0006289">
    <property type="term" value="P:nucleotide-excision repair"/>
    <property type="evidence" value="ECO:0007669"/>
    <property type="project" value="UniProtKB-UniRule"/>
</dbReference>
<dbReference type="GO" id="GO:0009432">
    <property type="term" value="P:SOS response"/>
    <property type="evidence" value="ECO:0007669"/>
    <property type="project" value="UniProtKB-UniRule"/>
</dbReference>
<dbReference type="CDD" id="cd10434">
    <property type="entry name" value="GIY-YIG_UvrC_Cho"/>
    <property type="match status" value="1"/>
</dbReference>
<dbReference type="FunFam" id="3.30.420.340:FF:000002">
    <property type="entry name" value="UvrABC system protein C"/>
    <property type="match status" value="1"/>
</dbReference>
<dbReference type="FunFam" id="3.40.1440.10:FF:000001">
    <property type="entry name" value="UvrABC system protein C"/>
    <property type="match status" value="1"/>
</dbReference>
<dbReference type="Gene3D" id="1.10.150.20">
    <property type="entry name" value="5' to 3' exonuclease, C-terminal subdomain"/>
    <property type="match status" value="1"/>
</dbReference>
<dbReference type="Gene3D" id="3.40.1440.10">
    <property type="entry name" value="GIY-YIG endonuclease"/>
    <property type="match status" value="1"/>
</dbReference>
<dbReference type="Gene3D" id="4.10.860.10">
    <property type="entry name" value="UVR domain"/>
    <property type="match status" value="1"/>
</dbReference>
<dbReference type="Gene3D" id="3.30.420.340">
    <property type="entry name" value="UvrC, RNAse H endonuclease domain"/>
    <property type="match status" value="1"/>
</dbReference>
<dbReference type="HAMAP" id="MF_00203">
    <property type="entry name" value="UvrC"/>
    <property type="match status" value="1"/>
</dbReference>
<dbReference type="InterPro" id="IPR000305">
    <property type="entry name" value="GIY-YIG_endonuc"/>
</dbReference>
<dbReference type="InterPro" id="IPR035901">
    <property type="entry name" value="GIY-YIG_endonuc_sf"/>
</dbReference>
<dbReference type="InterPro" id="IPR047296">
    <property type="entry name" value="GIY-YIG_UvrC_Cho"/>
</dbReference>
<dbReference type="InterPro" id="IPR010994">
    <property type="entry name" value="RuvA_2-like"/>
</dbReference>
<dbReference type="InterPro" id="IPR001943">
    <property type="entry name" value="UVR_dom"/>
</dbReference>
<dbReference type="InterPro" id="IPR036876">
    <property type="entry name" value="UVR_dom_sf"/>
</dbReference>
<dbReference type="InterPro" id="IPR050066">
    <property type="entry name" value="UvrABC_protein_C"/>
</dbReference>
<dbReference type="InterPro" id="IPR004791">
    <property type="entry name" value="UvrC"/>
</dbReference>
<dbReference type="InterPro" id="IPR001162">
    <property type="entry name" value="UvrC_RNase_H_dom"/>
</dbReference>
<dbReference type="InterPro" id="IPR038476">
    <property type="entry name" value="UvrC_RNase_H_dom_sf"/>
</dbReference>
<dbReference type="NCBIfam" id="NF001824">
    <property type="entry name" value="PRK00558.1-5"/>
    <property type="match status" value="1"/>
</dbReference>
<dbReference type="NCBIfam" id="TIGR00194">
    <property type="entry name" value="uvrC"/>
    <property type="match status" value="1"/>
</dbReference>
<dbReference type="PANTHER" id="PTHR30562:SF1">
    <property type="entry name" value="UVRABC SYSTEM PROTEIN C"/>
    <property type="match status" value="1"/>
</dbReference>
<dbReference type="PANTHER" id="PTHR30562">
    <property type="entry name" value="UVRC/OXIDOREDUCTASE"/>
    <property type="match status" value="1"/>
</dbReference>
<dbReference type="Pfam" id="PF01541">
    <property type="entry name" value="GIY-YIG"/>
    <property type="match status" value="1"/>
</dbReference>
<dbReference type="Pfam" id="PF14520">
    <property type="entry name" value="HHH_5"/>
    <property type="match status" value="1"/>
</dbReference>
<dbReference type="Pfam" id="PF02151">
    <property type="entry name" value="UVR"/>
    <property type="match status" value="1"/>
</dbReference>
<dbReference type="Pfam" id="PF22920">
    <property type="entry name" value="UvrC_RNaseH"/>
    <property type="match status" value="1"/>
</dbReference>
<dbReference type="Pfam" id="PF08459">
    <property type="entry name" value="UvrC_RNaseH_dom"/>
    <property type="match status" value="1"/>
</dbReference>
<dbReference type="SMART" id="SM00465">
    <property type="entry name" value="GIYc"/>
    <property type="match status" value="1"/>
</dbReference>
<dbReference type="SUPFAM" id="SSF46600">
    <property type="entry name" value="C-terminal UvrC-binding domain of UvrB"/>
    <property type="match status" value="1"/>
</dbReference>
<dbReference type="SUPFAM" id="SSF82771">
    <property type="entry name" value="GIY-YIG endonuclease"/>
    <property type="match status" value="1"/>
</dbReference>
<dbReference type="SUPFAM" id="SSF47781">
    <property type="entry name" value="RuvA domain 2-like"/>
    <property type="match status" value="1"/>
</dbReference>
<dbReference type="PROSITE" id="PS50164">
    <property type="entry name" value="GIY_YIG"/>
    <property type="match status" value="1"/>
</dbReference>
<dbReference type="PROSITE" id="PS50151">
    <property type="entry name" value="UVR"/>
    <property type="match status" value="1"/>
</dbReference>
<dbReference type="PROSITE" id="PS50165">
    <property type="entry name" value="UVRC"/>
    <property type="match status" value="1"/>
</dbReference>
<accession>Q5WEK8</accession>
<feature type="chain" id="PRO_0000227397" description="UvrABC system protein C">
    <location>
        <begin position="1"/>
        <end position="594"/>
    </location>
</feature>
<feature type="domain" description="GIY-YIG" evidence="1">
    <location>
        <begin position="14"/>
        <end position="91"/>
    </location>
</feature>
<feature type="domain" description="UVR" evidence="1">
    <location>
        <begin position="196"/>
        <end position="231"/>
    </location>
</feature>
<organism>
    <name type="scientific">Shouchella clausii (strain KSM-K16)</name>
    <name type="common">Alkalihalobacillus clausii</name>
    <dbReference type="NCBI Taxonomy" id="66692"/>
    <lineage>
        <taxon>Bacteria</taxon>
        <taxon>Bacillati</taxon>
        <taxon>Bacillota</taxon>
        <taxon>Bacilli</taxon>
        <taxon>Bacillales</taxon>
        <taxon>Bacillaceae</taxon>
        <taxon>Shouchella</taxon>
    </lineage>
</organism>
<name>UVRC_SHOC1</name>
<evidence type="ECO:0000255" key="1">
    <source>
        <dbReference type="HAMAP-Rule" id="MF_00203"/>
    </source>
</evidence>
<proteinExistence type="inferred from homology"/>
<reference key="1">
    <citation type="submission" date="2003-10" db="EMBL/GenBank/DDBJ databases">
        <title>The complete genome sequence of the alkaliphilic Bacillus clausii KSM-K16.</title>
        <authorList>
            <person name="Takaki Y."/>
            <person name="Kageyama Y."/>
            <person name="Shimamura S."/>
            <person name="Suzuki H."/>
            <person name="Nishi S."/>
            <person name="Hatada Y."/>
            <person name="Kawai S."/>
            <person name="Ito S."/>
            <person name="Horikoshi K."/>
        </authorList>
    </citation>
    <scope>NUCLEOTIDE SEQUENCE [LARGE SCALE GENOMIC DNA]</scope>
    <source>
        <strain>KSM-K16</strain>
    </source>
</reference>
<keyword id="KW-0963">Cytoplasm</keyword>
<keyword id="KW-0227">DNA damage</keyword>
<keyword id="KW-0228">DNA excision</keyword>
<keyword id="KW-0234">DNA repair</keyword>
<keyword id="KW-0267">Excision nuclease</keyword>
<keyword id="KW-1185">Reference proteome</keyword>
<keyword id="KW-0742">SOS response</keyword>
<sequence length="594" mass="68284">MNETITNKLALLPDKPGCYLMKDRQGTIIYVGKAKVLKNRVRSYFTGSHDSKTQRLVGEICDFEYIVTSSNIEALILELTLIKKHDPKYNVLLKDDKTYPYIKITNERHPRLLITRKVKKDGAKYFGPYPNAGAATETKKLLDRLYPLRKCRKMPDSVCLYYHIGQCLAPCVYEVSEETNQTMVNEITKFLKNGHSDIKEQLRERMEKAAEDLDFERAKELRDTIAQMEKVMEKQKMAFADKTDRDVFGFSYDKGWMCVQVFFIRQGRLIERDVSIFPFYQEASEELLTFIARFYLEKNHIKPKEIFVAESVDKQLLKELLETRVTQPKRGQKKALLDLAEENAALALKEKFSLIERDEQRTVKAVERLGEAIGINAPYRIEAFDNSNIQGVDPVSAMVVFVNGVPQRKEYRKYKIKTVEGPDDYGSMREVVRRRYVRLLKEKRPLPDLIVIDGGAGQIAAAKEVIEDELGQAIPVCGLAKDDKHRTSQLLMGSPPVVVPLQRDSHEFYLLQRIQDEVHRFAITFHRQTRAKSFLQSALDDIPGVGEKRRKALLKTFGSVKKIKEASIEDLSKHVPTKLAETIHHTLNKNKPNA</sequence>